<dbReference type="EMBL" id="CP000356">
    <property type="protein sequence ID" value="ABF54520.1"/>
    <property type="molecule type" value="Genomic_DNA"/>
</dbReference>
<dbReference type="RefSeq" id="WP_011543085.1">
    <property type="nucleotide sequence ID" value="NC_008048.1"/>
</dbReference>
<dbReference type="SMR" id="Q1GPA2"/>
<dbReference type="STRING" id="317655.Sala_2815"/>
<dbReference type="KEGG" id="sal:Sala_2815"/>
<dbReference type="eggNOG" id="COG0090">
    <property type="taxonomic scope" value="Bacteria"/>
</dbReference>
<dbReference type="HOGENOM" id="CLU_036235_2_1_5"/>
<dbReference type="OrthoDB" id="9778722at2"/>
<dbReference type="Proteomes" id="UP000006578">
    <property type="component" value="Chromosome"/>
</dbReference>
<dbReference type="GO" id="GO:0015934">
    <property type="term" value="C:large ribosomal subunit"/>
    <property type="evidence" value="ECO:0007669"/>
    <property type="project" value="InterPro"/>
</dbReference>
<dbReference type="GO" id="GO:0019843">
    <property type="term" value="F:rRNA binding"/>
    <property type="evidence" value="ECO:0007669"/>
    <property type="project" value="UniProtKB-UniRule"/>
</dbReference>
<dbReference type="GO" id="GO:0003735">
    <property type="term" value="F:structural constituent of ribosome"/>
    <property type="evidence" value="ECO:0007669"/>
    <property type="project" value="InterPro"/>
</dbReference>
<dbReference type="GO" id="GO:0016740">
    <property type="term" value="F:transferase activity"/>
    <property type="evidence" value="ECO:0007669"/>
    <property type="project" value="InterPro"/>
</dbReference>
<dbReference type="GO" id="GO:0002181">
    <property type="term" value="P:cytoplasmic translation"/>
    <property type="evidence" value="ECO:0007669"/>
    <property type="project" value="TreeGrafter"/>
</dbReference>
<dbReference type="FunFam" id="2.30.30.30:FF:000001">
    <property type="entry name" value="50S ribosomal protein L2"/>
    <property type="match status" value="1"/>
</dbReference>
<dbReference type="FunFam" id="4.10.950.10:FF:000001">
    <property type="entry name" value="50S ribosomal protein L2"/>
    <property type="match status" value="1"/>
</dbReference>
<dbReference type="Gene3D" id="2.30.30.30">
    <property type="match status" value="1"/>
</dbReference>
<dbReference type="Gene3D" id="2.40.50.140">
    <property type="entry name" value="Nucleic acid-binding proteins"/>
    <property type="match status" value="1"/>
</dbReference>
<dbReference type="Gene3D" id="4.10.950.10">
    <property type="entry name" value="Ribosomal protein L2, domain 3"/>
    <property type="match status" value="1"/>
</dbReference>
<dbReference type="HAMAP" id="MF_01320_B">
    <property type="entry name" value="Ribosomal_uL2_B"/>
    <property type="match status" value="1"/>
</dbReference>
<dbReference type="InterPro" id="IPR012340">
    <property type="entry name" value="NA-bd_OB-fold"/>
</dbReference>
<dbReference type="InterPro" id="IPR014722">
    <property type="entry name" value="Rib_uL2_dom2"/>
</dbReference>
<dbReference type="InterPro" id="IPR002171">
    <property type="entry name" value="Ribosomal_uL2"/>
</dbReference>
<dbReference type="InterPro" id="IPR005880">
    <property type="entry name" value="Ribosomal_uL2_bac/org-type"/>
</dbReference>
<dbReference type="InterPro" id="IPR022669">
    <property type="entry name" value="Ribosomal_uL2_C"/>
</dbReference>
<dbReference type="InterPro" id="IPR022671">
    <property type="entry name" value="Ribosomal_uL2_CS"/>
</dbReference>
<dbReference type="InterPro" id="IPR014726">
    <property type="entry name" value="Ribosomal_uL2_dom3"/>
</dbReference>
<dbReference type="InterPro" id="IPR022666">
    <property type="entry name" value="Ribosomal_uL2_RNA-bd_dom"/>
</dbReference>
<dbReference type="InterPro" id="IPR008991">
    <property type="entry name" value="Translation_prot_SH3-like_sf"/>
</dbReference>
<dbReference type="NCBIfam" id="TIGR01171">
    <property type="entry name" value="rplB_bact"/>
    <property type="match status" value="1"/>
</dbReference>
<dbReference type="PANTHER" id="PTHR13691:SF5">
    <property type="entry name" value="LARGE RIBOSOMAL SUBUNIT PROTEIN UL2M"/>
    <property type="match status" value="1"/>
</dbReference>
<dbReference type="PANTHER" id="PTHR13691">
    <property type="entry name" value="RIBOSOMAL PROTEIN L2"/>
    <property type="match status" value="1"/>
</dbReference>
<dbReference type="Pfam" id="PF00181">
    <property type="entry name" value="Ribosomal_L2"/>
    <property type="match status" value="1"/>
</dbReference>
<dbReference type="Pfam" id="PF03947">
    <property type="entry name" value="Ribosomal_L2_C"/>
    <property type="match status" value="1"/>
</dbReference>
<dbReference type="PIRSF" id="PIRSF002158">
    <property type="entry name" value="Ribosomal_L2"/>
    <property type="match status" value="1"/>
</dbReference>
<dbReference type="SMART" id="SM01383">
    <property type="entry name" value="Ribosomal_L2"/>
    <property type="match status" value="1"/>
</dbReference>
<dbReference type="SMART" id="SM01382">
    <property type="entry name" value="Ribosomal_L2_C"/>
    <property type="match status" value="1"/>
</dbReference>
<dbReference type="SUPFAM" id="SSF50249">
    <property type="entry name" value="Nucleic acid-binding proteins"/>
    <property type="match status" value="1"/>
</dbReference>
<dbReference type="SUPFAM" id="SSF50104">
    <property type="entry name" value="Translation proteins SH3-like domain"/>
    <property type="match status" value="1"/>
</dbReference>
<dbReference type="PROSITE" id="PS00467">
    <property type="entry name" value="RIBOSOMAL_L2"/>
    <property type="match status" value="1"/>
</dbReference>
<protein>
    <recommendedName>
        <fullName evidence="1">Large ribosomal subunit protein uL2</fullName>
    </recommendedName>
    <alternativeName>
        <fullName evidence="3">50S ribosomal protein L2</fullName>
    </alternativeName>
</protein>
<name>RL2_SPHAL</name>
<sequence length="278" mass="30375">MALKSYNPTSPGQRGLILVDKSALWKGKPVKALTEGKRKTGGRNNKGHVTSRGIAGGHKQKYRFIDFKRRKWDVPATVERLEYDPNRTAFIALVKYEDGELAYILAPQRLAVGDTIVAGKKTDVKPGNAMELAQMPVGTIVHNIEMKPGKGGQIARSAGTYAQVVGRDRGLVIVRLGSGEQRYIRGECMGTVGAVSNPDNQNTNLGKAGRNRWLGKRPLTRGVAKNPVDHPHGGGEGRTSGGRHPVTPWGKPTKGARTRHNKSTDKMIIRSRHAKKKR</sequence>
<gene>
    <name evidence="1" type="primary">rplB</name>
    <name type="ordered locus">Sala_2815</name>
</gene>
<reference key="1">
    <citation type="journal article" date="2009" name="Proc. Natl. Acad. Sci. U.S.A.">
        <title>The genomic basis of trophic strategy in marine bacteria.</title>
        <authorList>
            <person name="Lauro F.M."/>
            <person name="McDougald D."/>
            <person name="Thomas T."/>
            <person name="Williams T.J."/>
            <person name="Egan S."/>
            <person name="Rice S."/>
            <person name="DeMaere M.Z."/>
            <person name="Ting L."/>
            <person name="Ertan H."/>
            <person name="Johnson J."/>
            <person name="Ferriera S."/>
            <person name="Lapidus A."/>
            <person name="Anderson I."/>
            <person name="Kyrpides N."/>
            <person name="Munk A.C."/>
            <person name="Detter C."/>
            <person name="Han C.S."/>
            <person name="Brown M.V."/>
            <person name="Robb F.T."/>
            <person name="Kjelleberg S."/>
            <person name="Cavicchioli R."/>
        </authorList>
    </citation>
    <scope>NUCLEOTIDE SEQUENCE [LARGE SCALE GENOMIC DNA]</scope>
    <source>
        <strain>DSM 13593 / LMG 18877 / RB2256</strain>
    </source>
</reference>
<feature type="chain" id="PRO_0000310019" description="Large ribosomal subunit protein uL2">
    <location>
        <begin position="1"/>
        <end position="278"/>
    </location>
</feature>
<feature type="region of interest" description="Disordered" evidence="2">
    <location>
        <begin position="33"/>
        <end position="53"/>
    </location>
</feature>
<feature type="region of interest" description="Disordered" evidence="2">
    <location>
        <begin position="219"/>
        <end position="278"/>
    </location>
</feature>
<feature type="compositionally biased region" description="Basic residues" evidence="2">
    <location>
        <begin position="269"/>
        <end position="278"/>
    </location>
</feature>
<proteinExistence type="inferred from homology"/>
<organism>
    <name type="scientific">Sphingopyxis alaskensis (strain DSM 13593 / LMG 18877 / RB2256)</name>
    <name type="common">Sphingomonas alaskensis</name>
    <dbReference type="NCBI Taxonomy" id="317655"/>
    <lineage>
        <taxon>Bacteria</taxon>
        <taxon>Pseudomonadati</taxon>
        <taxon>Pseudomonadota</taxon>
        <taxon>Alphaproteobacteria</taxon>
        <taxon>Sphingomonadales</taxon>
        <taxon>Sphingomonadaceae</taxon>
        <taxon>Sphingopyxis</taxon>
    </lineage>
</organism>
<accession>Q1GPA2</accession>
<keyword id="KW-1185">Reference proteome</keyword>
<keyword id="KW-0687">Ribonucleoprotein</keyword>
<keyword id="KW-0689">Ribosomal protein</keyword>
<keyword id="KW-0694">RNA-binding</keyword>
<keyword id="KW-0699">rRNA-binding</keyword>
<comment type="function">
    <text evidence="1">One of the primary rRNA binding proteins. Required for association of the 30S and 50S subunits to form the 70S ribosome, for tRNA binding and peptide bond formation. It has been suggested to have peptidyltransferase activity; this is somewhat controversial. Makes several contacts with the 16S rRNA in the 70S ribosome.</text>
</comment>
<comment type="subunit">
    <text evidence="1">Part of the 50S ribosomal subunit. Forms a bridge to the 30S subunit in the 70S ribosome.</text>
</comment>
<comment type="similarity">
    <text evidence="1">Belongs to the universal ribosomal protein uL2 family.</text>
</comment>
<evidence type="ECO:0000255" key="1">
    <source>
        <dbReference type="HAMAP-Rule" id="MF_01320"/>
    </source>
</evidence>
<evidence type="ECO:0000256" key="2">
    <source>
        <dbReference type="SAM" id="MobiDB-lite"/>
    </source>
</evidence>
<evidence type="ECO:0000305" key="3"/>